<evidence type="ECO:0000250" key="1"/>
<evidence type="ECO:0000250" key="2">
    <source>
        <dbReference type="UniProtKB" id="Q9NZD2"/>
    </source>
</evidence>
<evidence type="ECO:0000305" key="3"/>
<protein>
    <recommendedName>
        <fullName>Glycolipid transfer protein B</fullName>
        <shortName>GLTP-B</shortName>
    </recommendedName>
</protein>
<feature type="chain" id="PRO_0000343612" description="Glycolipid transfer protein B">
    <location>
        <begin position="1"/>
        <end position="209"/>
    </location>
</feature>
<feature type="repeat" description="1">
    <location>
        <begin position="45"/>
        <end position="55"/>
    </location>
</feature>
<feature type="repeat" description="2">
    <location>
        <begin position="56"/>
        <end position="66"/>
    </location>
</feature>
<feature type="region of interest" description="2 X 12 AA approximate tandem repeats">
    <location>
        <begin position="45"/>
        <end position="66"/>
    </location>
</feature>
<feature type="binding site" evidence="2">
    <location>
        <begin position="48"/>
        <end position="55"/>
    </location>
    <ligand>
        <name>beta-D-galactosyl-(1-&gt;4)-beta-D-glucosyl-(1&lt;-&gt;1)-N-[(9Z)-octadecenoyl]-sphing-4-enine</name>
        <dbReference type="ChEBI" id="CHEBI:131557"/>
    </ligand>
</feature>
<feature type="binding site" evidence="2">
    <location>
        <position position="140"/>
    </location>
    <ligand>
        <name>beta-D-galactosyl-(1-&gt;4)-beta-D-glucosyl-(1&lt;-&gt;1)-N-[(9Z)-octadecenoyl]-sphing-4-enine</name>
        <dbReference type="ChEBI" id="CHEBI:131557"/>
    </ligand>
</feature>
<feature type="binding site" evidence="2">
    <location>
        <position position="207"/>
    </location>
    <ligand>
        <name>beta-D-galactosyl-(1-&gt;4)-beta-D-glucosyl-(1&lt;-&gt;1)-N-[(9Z)-octadecenoyl]-sphing-4-enine</name>
        <dbReference type="ChEBI" id="CHEBI:131557"/>
    </ligand>
</feature>
<keyword id="KW-0963">Cytoplasm</keyword>
<keyword id="KW-0445">Lipid transport</keyword>
<keyword id="KW-1185">Reference proteome</keyword>
<keyword id="KW-0677">Repeat</keyword>
<keyword id="KW-0813">Transport</keyword>
<dbReference type="EMBL" id="BC068757">
    <property type="protein sequence ID" value="AAH68757.1"/>
    <property type="molecule type" value="mRNA"/>
</dbReference>
<dbReference type="RefSeq" id="NP_001084618.1">
    <property type="nucleotide sequence ID" value="NM_001091149.1"/>
</dbReference>
<dbReference type="SMR" id="Q6NU44"/>
<dbReference type="DNASU" id="414574"/>
<dbReference type="GeneID" id="414574"/>
<dbReference type="KEGG" id="xla:414574"/>
<dbReference type="AGR" id="Xenbase:XB-GENE-6078013"/>
<dbReference type="CTD" id="414574"/>
<dbReference type="Xenbase" id="XB-GENE-6078013">
    <property type="gene designation" value="gltp.L"/>
</dbReference>
<dbReference type="OMA" id="FTCQALQ"/>
<dbReference type="OrthoDB" id="205255at2759"/>
<dbReference type="Proteomes" id="UP000186698">
    <property type="component" value="Chromosome 1L"/>
</dbReference>
<dbReference type="Bgee" id="414574">
    <property type="expression patterns" value="Expressed in egg cell and 19 other cell types or tissues"/>
</dbReference>
<dbReference type="GO" id="GO:0005829">
    <property type="term" value="C:cytosol"/>
    <property type="evidence" value="ECO:0000318"/>
    <property type="project" value="GO_Central"/>
</dbReference>
<dbReference type="GO" id="GO:0016020">
    <property type="term" value="C:membrane"/>
    <property type="evidence" value="ECO:0007669"/>
    <property type="project" value="TreeGrafter"/>
</dbReference>
<dbReference type="GO" id="GO:1902387">
    <property type="term" value="F:ceramide 1-phosphate binding"/>
    <property type="evidence" value="ECO:0000318"/>
    <property type="project" value="GO_Central"/>
</dbReference>
<dbReference type="GO" id="GO:1902388">
    <property type="term" value="F:ceramide 1-phosphate transfer activity"/>
    <property type="evidence" value="ECO:0000318"/>
    <property type="project" value="GO_Central"/>
</dbReference>
<dbReference type="GO" id="GO:0035627">
    <property type="term" value="P:ceramide transport"/>
    <property type="evidence" value="ECO:0000318"/>
    <property type="project" value="GO_Central"/>
</dbReference>
<dbReference type="GO" id="GO:0120009">
    <property type="term" value="P:intermembrane lipid transfer"/>
    <property type="evidence" value="ECO:0000318"/>
    <property type="project" value="GO_Central"/>
</dbReference>
<dbReference type="FunFam" id="1.10.3520.10:FF:000003">
    <property type="entry name" value="glycolipid transfer protein"/>
    <property type="match status" value="1"/>
</dbReference>
<dbReference type="Gene3D" id="1.10.3520.10">
    <property type="entry name" value="Glycolipid transfer protein"/>
    <property type="match status" value="1"/>
</dbReference>
<dbReference type="InterPro" id="IPR036497">
    <property type="entry name" value="GLTP_sf"/>
</dbReference>
<dbReference type="InterPro" id="IPR014830">
    <property type="entry name" value="Glycolipid_transfer_prot_dom"/>
</dbReference>
<dbReference type="PANTHER" id="PTHR10219:SF97">
    <property type="entry name" value="GLYCOLIPID TRANSFER PROTEIN"/>
    <property type="match status" value="1"/>
</dbReference>
<dbReference type="PANTHER" id="PTHR10219">
    <property type="entry name" value="GLYCOLIPID TRANSFER PROTEIN-RELATED"/>
    <property type="match status" value="1"/>
</dbReference>
<dbReference type="Pfam" id="PF08718">
    <property type="entry name" value="GLTP"/>
    <property type="match status" value="1"/>
</dbReference>
<dbReference type="SUPFAM" id="SSF110004">
    <property type="entry name" value="Glycolipid transfer protein, GLTP"/>
    <property type="match status" value="1"/>
</dbReference>
<gene>
    <name type="primary">gltp-b</name>
</gene>
<accession>Q6NU44</accession>
<sequence>MAVLLLHQFKALPADKQIDTCSFLDSVSHLPAFFDCLGSAIFSPIKADITGNITKIRSVYESNPTQFKTLQMILEGEKELYGPKWPKAGATLALMWLKRGLKFIQVLLQSISDGERDDQNPNLIKVNITKAYDIALKNYHGWLVQKFFQTALIAAPYKDDFLKALSKGQAVKEEECIEKIRKFLVNYTTTIEAIYIMYNKMNAELDYKA</sequence>
<name>GLTPB_XENLA</name>
<comment type="function">
    <text evidence="1">Accelerates the intermembrane transfer of various glycolipids. Catalyzes the transfer of various glycosphingolipids between membranes but does not catalyze the transfer of phospholipids. May be involved in the intracellular translocation of glucosylceramides (By similarity).</text>
</comment>
<comment type="subcellular location">
    <subcellularLocation>
        <location evidence="1">Cytoplasm</location>
    </subcellularLocation>
</comment>
<comment type="similarity">
    <text evidence="3">Belongs to the GLTP family.</text>
</comment>
<proteinExistence type="evidence at transcript level"/>
<organism>
    <name type="scientific">Xenopus laevis</name>
    <name type="common">African clawed frog</name>
    <dbReference type="NCBI Taxonomy" id="8355"/>
    <lineage>
        <taxon>Eukaryota</taxon>
        <taxon>Metazoa</taxon>
        <taxon>Chordata</taxon>
        <taxon>Craniata</taxon>
        <taxon>Vertebrata</taxon>
        <taxon>Euteleostomi</taxon>
        <taxon>Amphibia</taxon>
        <taxon>Batrachia</taxon>
        <taxon>Anura</taxon>
        <taxon>Pipoidea</taxon>
        <taxon>Pipidae</taxon>
        <taxon>Xenopodinae</taxon>
        <taxon>Xenopus</taxon>
        <taxon>Xenopus</taxon>
    </lineage>
</organism>
<reference key="1">
    <citation type="submission" date="2004-04" db="EMBL/GenBank/DDBJ databases">
        <authorList>
            <consortium name="NIH - Xenopus Gene Collection (XGC) project"/>
        </authorList>
    </citation>
    <scope>NUCLEOTIDE SEQUENCE [LARGE SCALE MRNA]</scope>
    <source>
        <tissue>Embryo</tissue>
    </source>
</reference>